<proteinExistence type="inferred from homology"/>
<sequence length="440" mass="48917">MNVQLNSLSDTRKSLVVSLEASEVDAAHQEVVAEFARQARIPGFRPGKAPAAIIAKRFAKDITDEFKQRVVTKAYRDGLEKQKLDVLTVVNVEPGEVAQGKPASVTITVDVRPDFKLPDYVGLPTSVAPSEATEDEVDRVIEGMRAERAEFKVAERPAAKGDYVKLAYEGKIDGKPIAEIAPDKQIYSKVPQTWEEVEGANEGVIPGLGKQLAGLKVGDKKDVEIDFPADFAAVPELAGKKAVYAAEVLEVRERVLPPLDEAFFKAQHVGNLETLKVSVRSEIKRRKEAQNRAEQRRQVTDALTAKVDFPIPESLIESETQTVLRSFIEENMRRGVPQEQFEKDKKELFEGARQAATKRVKSRLVLAKIAEAEKVEVNEQDIDAFIYREAMRTGQKPDKLVKMLTTDREQLRAVQQSIIFDKAIDFLVSKATVTTVQPKG</sequence>
<feature type="chain" id="PRO_1000115562" description="Trigger factor">
    <location>
        <begin position="1"/>
        <end position="440"/>
    </location>
</feature>
<feature type="domain" description="PPIase FKBP-type" evidence="1">
    <location>
        <begin position="161"/>
        <end position="257"/>
    </location>
</feature>
<gene>
    <name evidence="1" type="primary">tig</name>
    <name type="ordered locus">Oter_2739</name>
</gene>
<protein>
    <recommendedName>
        <fullName evidence="1">Trigger factor</fullName>
        <shortName evidence="1">TF</shortName>
        <ecNumber evidence="1">5.2.1.8</ecNumber>
    </recommendedName>
    <alternativeName>
        <fullName evidence="1">PPIase</fullName>
    </alternativeName>
</protein>
<keyword id="KW-0131">Cell cycle</keyword>
<keyword id="KW-0132">Cell division</keyword>
<keyword id="KW-0143">Chaperone</keyword>
<keyword id="KW-0963">Cytoplasm</keyword>
<keyword id="KW-0413">Isomerase</keyword>
<keyword id="KW-1185">Reference proteome</keyword>
<keyword id="KW-0697">Rotamase</keyword>
<organism>
    <name type="scientific">Opitutus terrae (strain DSM 11246 / JCM 15787 / PB90-1)</name>
    <dbReference type="NCBI Taxonomy" id="452637"/>
    <lineage>
        <taxon>Bacteria</taxon>
        <taxon>Pseudomonadati</taxon>
        <taxon>Verrucomicrobiota</taxon>
        <taxon>Opitutia</taxon>
        <taxon>Opitutales</taxon>
        <taxon>Opitutaceae</taxon>
        <taxon>Opitutus</taxon>
    </lineage>
</organism>
<evidence type="ECO:0000255" key="1">
    <source>
        <dbReference type="HAMAP-Rule" id="MF_00303"/>
    </source>
</evidence>
<reference key="1">
    <citation type="journal article" date="2011" name="J. Bacteriol.">
        <title>Genome sequence of the verrucomicrobium Opitutus terrae PB90-1, an abundant inhabitant of rice paddy soil ecosystems.</title>
        <authorList>
            <person name="van Passel M.W."/>
            <person name="Kant R."/>
            <person name="Palva A."/>
            <person name="Copeland A."/>
            <person name="Lucas S."/>
            <person name="Lapidus A."/>
            <person name="Glavina del Rio T."/>
            <person name="Pitluck S."/>
            <person name="Goltsman E."/>
            <person name="Clum A."/>
            <person name="Sun H."/>
            <person name="Schmutz J."/>
            <person name="Larimer F.W."/>
            <person name="Land M.L."/>
            <person name="Hauser L."/>
            <person name="Kyrpides N."/>
            <person name="Mikhailova N."/>
            <person name="Richardson P.P."/>
            <person name="Janssen P.H."/>
            <person name="de Vos W.M."/>
            <person name="Smidt H."/>
        </authorList>
    </citation>
    <scope>NUCLEOTIDE SEQUENCE [LARGE SCALE GENOMIC DNA]</scope>
    <source>
        <strain>DSM 11246 / JCM 15787 / PB90-1</strain>
    </source>
</reference>
<name>TIG_OPITP</name>
<dbReference type="EC" id="5.2.1.8" evidence="1"/>
<dbReference type="EMBL" id="CP001032">
    <property type="protein sequence ID" value="ACB76020.1"/>
    <property type="molecule type" value="Genomic_DNA"/>
</dbReference>
<dbReference type="RefSeq" id="WP_012375555.1">
    <property type="nucleotide sequence ID" value="NC_010571.1"/>
</dbReference>
<dbReference type="SMR" id="B1ZW06"/>
<dbReference type="STRING" id="452637.Oter_2739"/>
<dbReference type="KEGG" id="ote:Oter_2739"/>
<dbReference type="eggNOG" id="COG0544">
    <property type="taxonomic scope" value="Bacteria"/>
</dbReference>
<dbReference type="HOGENOM" id="CLU_033058_2_0_0"/>
<dbReference type="OrthoDB" id="9767721at2"/>
<dbReference type="Proteomes" id="UP000007013">
    <property type="component" value="Chromosome"/>
</dbReference>
<dbReference type="GO" id="GO:0005737">
    <property type="term" value="C:cytoplasm"/>
    <property type="evidence" value="ECO:0007669"/>
    <property type="project" value="UniProtKB-SubCell"/>
</dbReference>
<dbReference type="GO" id="GO:0003755">
    <property type="term" value="F:peptidyl-prolyl cis-trans isomerase activity"/>
    <property type="evidence" value="ECO:0007669"/>
    <property type="project" value="UniProtKB-UniRule"/>
</dbReference>
<dbReference type="GO" id="GO:0044183">
    <property type="term" value="F:protein folding chaperone"/>
    <property type="evidence" value="ECO:0007669"/>
    <property type="project" value="TreeGrafter"/>
</dbReference>
<dbReference type="GO" id="GO:0043022">
    <property type="term" value="F:ribosome binding"/>
    <property type="evidence" value="ECO:0007669"/>
    <property type="project" value="TreeGrafter"/>
</dbReference>
<dbReference type="GO" id="GO:0051083">
    <property type="term" value="P:'de novo' cotranslational protein folding"/>
    <property type="evidence" value="ECO:0007669"/>
    <property type="project" value="TreeGrafter"/>
</dbReference>
<dbReference type="GO" id="GO:0051301">
    <property type="term" value="P:cell division"/>
    <property type="evidence" value="ECO:0007669"/>
    <property type="project" value="UniProtKB-KW"/>
</dbReference>
<dbReference type="GO" id="GO:0061077">
    <property type="term" value="P:chaperone-mediated protein folding"/>
    <property type="evidence" value="ECO:0007669"/>
    <property type="project" value="TreeGrafter"/>
</dbReference>
<dbReference type="GO" id="GO:0015031">
    <property type="term" value="P:protein transport"/>
    <property type="evidence" value="ECO:0007669"/>
    <property type="project" value="UniProtKB-UniRule"/>
</dbReference>
<dbReference type="GO" id="GO:0043335">
    <property type="term" value="P:protein unfolding"/>
    <property type="evidence" value="ECO:0007669"/>
    <property type="project" value="TreeGrafter"/>
</dbReference>
<dbReference type="Gene3D" id="3.10.50.40">
    <property type="match status" value="1"/>
</dbReference>
<dbReference type="Gene3D" id="3.30.70.1050">
    <property type="entry name" value="Trigger factor ribosome-binding domain"/>
    <property type="match status" value="1"/>
</dbReference>
<dbReference type="Gene3D" id="1.10.3120.10">
    <property type="entry name" value="Trigger factor, C-terminal domain"/>
    <property type="match status" value="1"/>
</dbReference>
<dbReference type="HAMAP" id="MF_00303">
    <property type="entry name" value="Trigger_factor_Tig"/>
    <property type="match status" value="1"/>
</dbReference>
<dbReference type="InterPro" id="IPR046357">
    <property type="entry name" value="PPIase_dom_sf"/>
</dbReference>
<dbReference type="InterPro" id="IPR001179">
    <property type="entry name" value="PPIase_FKBP_dom"/>
</dbReference>
<dbReference type="InterPro" id="IPR005215">
    <property type="entry name" value="Trig_fac"/>
</dbReference>
<dbReference type="InterPro" id="IPR008880">
    <property type="entry name" value="Trigger_fac_C"/>
</dbReference>
<dbReference type="InterPro" id="IPR037041">
    <property type="entry name" value="Trigger_fac_C_sf"/>
</dbReference>
<dbReference type="InterPro" id="IPR008881">
    <property type="entry name" value="Trigger_fac_ribosome-bd_bac"/>
</dbReference>
<dbReference type="InterPro" id="IPR036611">
    <property type="entry name" value="Trigger_fac_ribosome-bd_sf"/>
</dbReference>
<dbReference type="InterPro" id="IPR027304">
    <property type="entry name" value="Trigger_fact/SurA_dom_sf"/>
</dbReference>
<dbReference type="NCBIfam" id="TIGR00115">
    <property type="entry name" value="tig"/>
    <property type="match status" value="1"/>
</dbReference>
<dbReference type="PANTHER" id="PTHR30560">
    <property type="entry name" value="TRIGGER FACTOR CHAPERONE AND PEPTIDYL-PROLYL CIS/TRANS ISOMERASE"/>
    <property type="match status" value="1"/>
</dbReference>
<dbReference type="PANTHER" id="PTHR30560:SF3">
    <property type="entry name" value="TRIGGER FACTOR-LIKE PROTEIN TIG, CHLOROPLASTIC"/>
    <property type="match status" value="1"/>
</dbReference>
<dbReference type="Pfam" id="PF00254">
    <property type="entry name" value="FKBP_C"/>
    <property type="match status" value="1"/>
</dbReference>
<dbReference type="Pfam" id="PF05698">
    <property type="entry name" value="Trigger_C"/>
    <property type="match status" value="1"/>
</dbReference>
<dbReference type="Pfam" id="PF05697">
    <property type="entry name" value="Trigger_N"/>
    <property type="match status" value="1"/>
</dbReference>
<dbReference type="PIRSF" id="PIRSF003095">
    <property type="entry name" value="Trigger_factor"/>
    <property type="match status" value="1"/>
</dbReference>
<dbReference type="SUPFAM" id="SSF54534">
    <property type="entry name" value="FKBP-like"/>
    <property type="match status" value="1"/>
</dbReference>
<dbReference type="SUPFAM" id="SSF109998">
    <property type="entry name" value="Triger factor/SurA peptide-binding domain-like"/>
    <property type="match status" value="1"/>
</dbReference>
<dbReference type="SUPFAM" id="SSF102735">
    <property type="entry name" value="Trigger factor ribosome-binding domain"/>
    <property type="match status" value="1"/>
</dbReference>
<dbReference type="PROSITE" id="PS50059">
    <property type="entry name" value="FKBP_PPIASE"/>
    <property type="match status" value="1"/>
</dbReference>
<accession>B1ZW06</accession>
<comment type="function">
    <text evidence="1">Involved in protein export. Acts as a chaperone by maintaining the newly synthesized protein in an open conformation. Functions as a peptidyl-prolyl cis-trans isomerase.</text>
</comment>
<comment type="catalytic activity">
    <reaction evidence="1">
        <text>[protein]-peptidylproline (omega=180) = [protein]-peptidylproline (omega=0)</text>
        <dbReference type="Rhea" id="RHEA:16237"/>
        <dbReference type="Rhea" id="RHEA-COMP:10747"/>
        <dbReference type="Rhea" id="RHEA-COMP:10748"/>
        <dbReference type="ChEBI" id="CHEBI:83833"/>
        <dbReference type="ChEBI" id="CHEBI:83834"/>
        <dbReference type="EC" id="5.2.1.8"/>
    </reaction>
</comment>
<comment type="subcellular location">
    <subcellularLocation>
        <location>Cytoplasm</location>
    </subcellularLocation>
    <text evidence="1">About half TF is bound to the ribosome near the polypeptide exit tunnel while the other half is free in the cytoplasm.</text>
</comment>
<comment type="domain">
    <text evidence="1">Consists of 3 domains; the N-terminus binds the ribosome, the middle domain has PPIase activity, while the C-terminus has intrinsic chaperone activity on its own.</text>
</comment>
<comment type="similarity">
    <text evidence="1">Belongs to the FKBP-type PPIase family. Tig subfamily.</text>
</comment>